<gene>
    <name evidence="1" type="primary">rpmF</name>
    <name type="ordered locus">xcc-b100_3343</name>
</gene>
<proteinExistence type="inferred from homology"/>
<organism>
    <name type="scientific">Xanthomonas campestris pv. campestris (strain B100)</name>
    <dbReference type="NCBI Taxonomy" id="509169"/>
    <lineage>
        <taxon>Bacteria</taxon>
        <taxon>Pseudomonadati</taxon>
        <taxon>Pseudomonadota</taxon>
        <taxon>Gammaproteobacteria</taxon>
        <taxon>Lysobacterales</taxon>
        <taxon>Lysobacteraceae</taxon>
        <taxon>Xanthomonas</taxon>
    </lineage>
</organism>
<dbReference type="EMBL" id="AM920689">
    <property type="protein sequence ID" value="CAP52708.1"/>
    <property type="molecule type" value="Genomic_DNA"/>
</dbReference>
<dbReference type="SMR" id="B0RYI8"/>
<dbReference type="KEGG" id="xca:xcc-b100_3343"/>
<dbReference type="HOGENOM" id="CLU_129084_2_1_6"/>
<dbReference type="Proteomes" id="UP000001188">
    <property type="component" value="Chromosome"/>
</dbReference>
<dbReference type="GO" id="GO:0015934">
    <property type="term" value="C:large ribosomal subunit"/>
    <property type="evidence" value="ECO:0007669"/>
    <property type="project" value="InterPro"/>
</dbReference>
<dbReference type="GO" id="GO:0003735">
    <property type="term" value="F:structural constituent of ribosome"/>
    <property type="evidence" value="ECO:0007669"/>
    <property type="project" value="InterPro"/>
</dbReference>
<dbReference type="GO" id="GO:0006412">
    <property type="term" value="P:translation"/>
    <property type="evidence" value="ECO:0007669"/>
    <property type="project" value="UniProtKB-UniRule"/>
</dbReference>
<dbReference type="HAMAP" id="MF_00340">
    <property type="entry name" value="Ribosomal_bL32"/>
    <property type="match status" value="1"/>
</dbReference>
<dbReference type="InterPro" id="IPR002677">
    <property type="entry name" value="Ribosomal_bL32"/>
</dbReference>
<dbReference type="InterPro" id="IPR044957">
    <property type="entry name" value="Ribosomal_bL32_bact"/>
</dbReference>
<dbReference type="InterPro" id="IPR011332">
    <property type="entry name" value="Ribosomal_zn-bd"/>
</dbReference>
<dbReference type="NCBIfam" id="TIGR01031">
    <property type="entry name" value="rpmF_bact"/>
    <property type="match status" value="1"/>
</dbReference>
<dbReference type="PANTHER" id="PTHR35534">
    <property type="entry name" value="50S RIBOSOMAL PROTEIN L32"/>
    <property type="match status" value="1"/>
</dbReference>
<dbReference type="PANTHER" id="PTHR35534:SF1">
    <property type="entry name" value="LARGE RIBOSOMAL SUBUNIT PROTEIN BL32"/>
    <property type="match status" value="1"/>
</dbReference>
<dbReference type="Pfam" id="PF01783">
    <property type="entry name" value="Ribosomal_L32p"/>
    <property type="match status" value="1"/>
</dbReference>
<dbReference type="SUPFAM" id="SSF57829">
    <property type="entry name" value="Zn-binding ribosomal proteins"/>
    <property type="match status" value="1"/>
</dbReference>
<accession>B0RYI8</accession>
<evidence type="ECO:0000255" key="1">
    <source>
        <dbReference type="HAMAP-Rule" id="MF_00340"/>
    </source>
</evidence>
<evidence type="ECO:0000256" key="2">
    <source>
        <dbReference type="SAM" id="MobiDB-lite"/>
    </source>
</evidence>
<evidence type="ECO:0000305" key="3"/>
<feature type="chain" id="PRO_1000120190" description="Large ribosomal subunit protein bL32">
    <location>
        <begin position="1"/>
        <end position="64"/>
    </location>
</feature>
<feature type="region of interest" description="Disordered" evidence="2">
    <location>
        <begin position="1"/>
        <end position="35"/>
    </location>
</feature>
<reference key="1">
    <citation type="journal article" date="2008" name="J. Biotechnol.">
        <title>The genome of Xanthomonas campestris pv. campestris B100 and its use for the reconstruction of metabolic pathways involved in xanthan biosynthesis.</title>
        <authorList>
            <person name="Vorhoelter F.-J."/>
            <person name="Schneiker S."/>
            <person name="Goesmann A."/>
            <person name="Krause L."/>
            <person name="Bekel T."/>
            <person name="Kaiser O."/>
            <person name="Linke B."/>
            <person name="Patschkowski T."/>
            <person name="Rueckert C."/>
            <person name="Schmid J."/>
            <person name="Sidhu V.K."/>
            <person name="Sieber V."/>
            <person name="Tauch A."/>
            <person name="Watt S.A."/>
            <person name="Weisshaar B."/>
            <person name="Becker A."/>
            <person name="Niehaus K."/>
            <person name="Puehler A."/>
        </authorList>
    </citation>
    <scope>NUCLEOTIDE SEQUENCE [LARGE SCALE GENOMIC DNA]</scope>
    <source>
        <strain>B100</strain>
    </source>
</reference>
<keyword id="KW-0687">Ribonucleoprotein</keyword>
<keyword id="KW-0689">Ribosomal protein</keyword>
<protein>
    <recommendedName>
        <fullName evidence="1">Large ribosomal subunit protein bL32</fullName>
    </recommendedName>
    <alternativeName>
        <fullName evidence="3">50S ribosomal protein L32</fullName>
    </alternativeName>
</protein>
<comment type="similarity">
    <text evidence="1">Belongs to the bacterial ribosomal protein bL32 family.</text>
</comment>
<name>RL32_XANCB</name>
<sequence>MAVQKSRVTPSRRGQRRSHDALTAKQLSTDPTSGEIHLRHHITADGYYRGKKVITTKSSAVQED</sequence>